<sequence length="218" mass="22936">MSETEIKGILGTKLGMTQIFDEDNRVIPVTVVEAGPCVVTQIRTVETDGYNAIQIAYGEIDPRKANKPAAGHFKKAGVTPRRHVAEIRMDDVSGYELGQDVTVEIFEGINFVDVTGTTKGKGYAGAMKRHGFAGQGAAHGNQAAHRRVGGIGACATPGRVFKGTRMAGRMGSDRVTTQNLKVQKIDADANLILIKGAIPGVRGGIVTVKTAVKGGAHA</sequence>
<organism>
    <name type="scientific">Corynebacterium diphtheriae (strain ATCC 700971 / NCTC 13129 / Biotype gravis)</name>
    <dbReference type="NCBI Taxonomy" id="257309"/>
    <lineage>
        <taxon>Bacteria</taxon>
        <taxon>Bacillati</taxon>
        <taxon>Actinomycetota</taxon>
        <taxon>Actinomycetes</taxon>
        <taxon>Mycobacteriales</taxon>
        <taxon>Corynebacteriaceae</taxon>
        <taxon>Corynebacterium</taxon>
    </lineage>
</organism>
<protein>
    <recommendedName>
        <fullName evidence="1">Large ribosomal subunit protein uL3</fullName>
    </recommendedName>
    <alternativeName>
        <fullName evidence="2">50S ribosomal protein L3</fullName>
    </alternativeName>
</protein>
<dbReference type="EMBL" id="BX248355">
    <property type="protein sequence ID" value="CAE48977.1"/>
    <property type="molecule type" value="Genomic_DNA"/>
</dbReference>
<dbReference type="RefSeq" id="WP_004566722.1">
    <property type="nucleotide sequence ID" value="NC_002935.2"/>
</dbReference>
<dbReference type="SMR" id="P60453"/>
<dbReference type="STRING" id="257309.DIP0473"/>
<dbReference type="GeneID" id="29422486"/>
<dbReference type="KEGG" id="cdi:DIP0473"/>
<dbReference type="HOGENOM" id="CLU_044142_4_1_11"/>
<dbReference type="Proteomes" id="UP000002198">
    <property type="component" value="Chromosome"/>
</dbReference>
<dbReference type="GO" id="GO:0022625">
    <property type="term" value="C:cytosolic large ribosomal subunit"/>
    <property type="evidence" value="ECO:0007669"/>
    <property type="project" value="TreeGrafter"/>
</dbReference>
<dbReference type="GO" id="GO:0019843">
    <property type="term" value="F:rRNA binding"/>
    <property type="evidence" value="ECO:0007669"/>
    <property type="project" value="UniProtKB-UniRule"/>
</dbReference>
<dbReference type="GO" id="GO:0003735">
    <property type="term" value="F:structural constituent of ribosome"/>
    <property type="evidence" value="ECO:0007669"/>
    <property type="project" value="InterPro"/>
</dbReference>
<dbReference type="GO" id="GO:0006412">
    <property type="term" value="P:translation"/>
    <property type="evidence" value="ECO:0007669"/>
    <property type="project" value="UniProtKB-UniRule"/>
</dbReference>
<dbReference type="FunFam" id="2.40.30.10:FF:000004">
    <property type="entry name" value="50S ribosomal protein L3"/>
    <property type="match status" value="1"/>
</dbReference>
<dbReference type="FunFam" id="3.30.160.810:FF:000001">
    <property type="entry name" value="50S ribosomal protein L3"/>
    <property type="match status" value="1"/>
</dbReference>
<dbReference type="Gene3D" id="3.30.160.810">
    <property type="match status" value="1"/>
</dbReference>
<dbReference type="Gene3D" id="2.40.30.10">
    <property type="entry name" value="Translation factors"/>
    <property type="match status" value="1"/>
</dbReference>
<dbReference type="HAMAP" id="MF_01325_B">
    <property type="entry name" value="Ribosomal_uL3_B"/>
    <property type="match status" value="1"/>
</dbReference>
<dbReference type="InterPro" id="IPR000597">
    <property type="entry name" value="Ribosomal_uL3"/>
</dbReference>
<dbReference type="InterPro" id="IPR019927">
    <property type="entry name" value="Ribosomal_uL3_bac/org-type"/>
</dbReference>
<dbReference type="InterPro" id="IPR019926">
    <property type="entry name" value="Ribosomal_uL3_CS"/>
</dbReference>
<dbReference type="InterPro" id="IPR009000">
    <property type="entry name" value="Transl_B-barrel_sf"/>
</dbReference>
<dbReference type="NCBIfam" id="TIGR03625">
    <property type="entry name" value="L3_bact"/>
    <property type="match status" value="1"/>
</dbReference>
<dbReference type="PANTHER" id="PTHR11229">
    <property type="entry name" value="50S RIBOSOMAL PROTEIN L3"/>
    <property type="match status" value="1"/>
</dbReference>
<dbReference type="PANTHER" id="PTHR11229:SF16">
    <property type="entry name" value="LARGE RIBOSOMAL SUBUNIT PROTEIN UL3C"/>
    <property type="match status" value="1"/>
</dbReference>
<dbReference type="Pfam" id="PF00297">
    <property type="entry name" value="Ribosomal_L3"/>
    <property type="match status" value="1"/>
</dbReference>
<dbReference type="SUPFAM" id="SSF50447">
    <property type="entry name" value="Translation proteins"/>
    <property type="match status" value="1"/>
</dbReference>
<dbReference type="PROSITE" id="PS00474">
    <property type="entry name" value="RIBOSOMAL_L3"/>
    <property type="match status" value="1"/>
</dbReference>
<keyword id="KW-1185">Reference proteome</keyword>
<keyword id="KW-0687">Ribonucleoprotein</keyword>
<keyword id="KW-0689">Ribosomal protein</keyword>
<keyword id="KW-0694">RNA-binding</keyword>
<keyword id="KW-0699">rRNA-binding</keyword>
<gene>
    <name evidence="1" type="primary">rplC</name>
    <name type="ordered locus">DIP0473</name>
</gene>
<accession>P60453</accession>
<reference key="1">
    <citation type="journal article" date="2003" name="Nucleic Acids Res.">
        <title>The complete genome sequence and analysis of Corynebacterium diphtheriae NCTC13129.</title>
        <authorList>
            <person name="Cerdeno-Tarraga A.-M."/>
            <person name="Efstratiou A."/>
            <person name="Dover L.G."/>
            <person name="Holden M.T.G."/>
            <person name="Pallen M.J."/>
            <person name="Bentley S.D."/>
            <person name="Besra G.S."/>
            <person name="Churcher C.M."/>
            <person name="James K.D."/>
            <person name="De Zoysa A."/>
            <person name="Chillingworth T."/>
            <person name="Cronin A."/>
            <person name="Dowd L."/>
            <person name="Feltwell T."/>
            <person name="Hamlin N."/>
            <person name="Holroyd S."/>
            <person name="Jagels K."/>
            <person name="Moule S."/>
            <person name="Quail M.A."/>
            <person name="Rabbinowitsch E."/>
            <person name="Rutherford K.M."/>
            <person name="Thomson N.R."/>
            <person name="Unwin L."/>
            <person name="Whitehead S."/>
            <person name="Barrell B.G."/>
            <person name="Parkhill J."/>
        </authorList>
    </citation>
    <scope>NUCLEOTIDE SEQUENCE [LARGE SCALE GENOMIC DNA]</scope>
    <source>
        <strain>ATCC 700971 / NCTC 13129 / Biotype gravis</strain>
    </source>
</reference>
<feature type="chain" id="PRO_0000077093" description="Large ribosomal subunit protein uL3">
    <location>
        <begin position="1"/>
        <end position="218"/>
    </location>
</feature>
<comment type="function">
    <text evidence="1">One of the primary rRNA binding proteins, it binds directly near the 3'-end of the 23S rRNA, where it nucleates assembly of the 50S subunit.</text>
</comment>
<comment type="subunit">
    <text evidence="1">Part of the 50S ribosomal subunit. Forms a cluster with proteins L14 and L19.</text>
</comment>
<comment type="similarity">
    <text evidence="1">Belongs to the universal ribosomal protein uL3 family.</text>
</comment>
<evidence type="ECO:0000255" key="1">
    <source>
        <dbReference type="HAMAP-Rule" id="MF_01325"/>
    </source>
</evidence>
<evidence type="ECO:0000305" key="2"/>
<name>RL3_CORDI</name>
<proteinExistence type="inferred from homology"/>